<reference key="1">
    <citation type="journal article" date="2002" name="Genes Dev.">
        <title>The Arabidopsis PILZ group genes encode tubulin-folding cofactor orthologs required for cell division but not cell growth.</title>
        <authorList>
            <person name="Steinborn K."/>
            <person name="Maulbetsch C."/>
            <person name="Priester B."/>
            <person name="Trautmann S."/>
            <person name="Pacher T."/>
            <person name="Geiges B."/>
            <person name="Kuettner F."/>
            <person name="Lepiniec L."/>
            <person name="Stierhof Y.-D."/>
            <person name="Schwarz H."/>
            <person name="Juergens G."/>
            <person name="Mayer U."/>
        </authorList>
    </citation>
    <scope>NUCLEOTIDE SEQUENCE [MRNA]</scope>
    <scope>FUNCTION</scope>
    <scope>DISRUPTION PHENOTYPE</scope>
    <scope>MUTAGENESIS OF SER-238</scope>
    <scope>SUBUNIT</scope>
    <scope>TISSUE SPECIFICITY</scope>
    <scope>SUBCELLULAR LOCATION</scope>
    <source>
        <strain>cv. Landsberg erecta</strain>
        <strain>cv. Wassilewskija</strain>
        <tissue>Flower</tissue>
    </source>
</reference>
<reference key="2">
    <citation type="journal article" date="1999" name="Nature">
        <title>Sequence and analysis of chromosome 4 of the plant Arabidopsis thaliana.</title>
        <authorList>
            <person name="Mayer K.F.X."/>
            <person name="Schueller C."/>
            <person name="Wambutt R."/>
            <person name="Murphy G."/>
            <person name="Volckaert G."/>
            <person name="Pohl T."/>
            <person name="Duesterhoeft A."/>
            <person name="Stiekema W."/>
            <person name="Entian K.-D."/>
            <person name="Terryn N."/>
            <person name="Harris B."/>
            <person name="Ansorge W."/>
            <person name="Brandt P."/>
            <person name="Grivell L.A."/>
            <person name="Rieger M."/>
            <person name="Weichselgartner M."/>
            <person name="de Simone V."/>
            <person name="Obermaier B."/>
            <person name="Mache R."/>
            <person name="Mueller M."/>
            <person name="Kreis M."/>
            <person name="Delseny M."/>
            <person name="Puigdomenech P."/>
            <person name="Watson M."/>
            <person name="Schmidtheini T."/>
            <person name="Reichert B."/>
            <person name="Portetelle D."/>
            <person name="Perez-Alonso M."/>
            <person name="Boutry M."/>
            <person name="Bancroft I."/>
            <person name="Vos P."/>
            <person name="Hoheisel J."/>
            <person name="Zimmermann W."/>
            <person name="Wedler H."/>
            <person name="Ridley P."/>
            <person name="Langham S.-A."/>
            <person name="McCullagh B."/>
            <person name="Bilham L."/>
            <person name="Robben J."/>
            <person name="van der Schueren J."/>
            <person name="Grymonprez B."/>
            <person name="Chuang Y.-J."/>
            <person name="Vandenbussche F."/>
            <person name="Braeken M."/>
            <person name="Weltjens I."/>
            <person name="Voet M."/>
            <person name="Bastiaens I."/>
            <person name="Aert R."/>
            <person name="Defoor E."/>
            <person name="Weitzenegger T."/>
            <person name="Bothe G."/>
            <person name="Ramsperger U."/>
            <person name="Hilbert H."/>
            <person name="Braun M."/>
            <person name="Holzer E."/>
            <person name="Brandt A."/>
            <person name="Peters S."/>
            <person name="van Staveren M."/>
            <person name="Dirkse W."/>
            <person name="Mooijman P."/>
            <person name="Klein Lankhorst R."/>
            <person name="Rose M."/>
            <person name="Hauf J."/>
            <person name="Koetter P."/>
            <person name="Berneiser S."/>
            <person name="Hempel S."/>
            <person name="Feldpausch M."/>
            <person name="Lamberth S."/>
            <person name="Van den Daele H."/>
            <person name="De Keyser A."/>
            <person name="Buysshaert C."/>
            <person name="Gielen J."/>
            <person name="Villarroel R."/>
            <person name="De Clercq R."/>
            <person name="van Montagu M."/>
            <person name="Rogers J."/>
            <person name="Cronin A."/>
            <person name="Quail M.A."/>
            <person name="Bray-Allen S."/>
            <person name="Clark L."/>
            <person name="Doggett J."/>
            <person name="Hall S."/>
            <person name="Kay M."/>
            <person name="Lennard N."/>
            <person name="McLay K."/>
            <person name="Mayes R."/>
            <person name="Pettett A."/>
            <person name="Rajandream M.A."/>
            <person name="Lyne M."/>
            <person name="Benes V."/>
            <person name="Rechmann S."/>
            <person name="Borkova D."/>
            <person name="Bloecker H."/>
            <person name="Scharfe M."/>
            <person name="Grimm M."/>
            <person name="Loehnert T.-H."/>
            <person name="Dose S."/>
            <person name="de Haan M."/>
            <person name="Maarse A.C."/>
            <person name="Schaefer M."/>
            <person name="Mueller-Auer S."/>
            <person name="Gabel C."/>
            <person name="Fuchs M."/>
            <person name="Fartmann B."/>
            <person name="Granderath K."/>
            <person name="Dauner D."/>
            <person name="Herzl A."/>
            <person name="Neumann S."/>
            <person name="Argiriou A."/>
            <person name="Vitale D."/>
            <person name="Liguori R."/>
            <person name="Piravandi E."/>
            <person name="Massenet O."/>
            <person name="Quigley F."/>
            <person name="Clabauld G."/>
            <person name="Muendlein A."/>
            <person name="Felber R."/>
            <person name="Schnabl S."/>
            <person name="Hiller R."/>
            <person name="Schmidt W."/>
            <person name="Lecharny A."/>
            <person name="Aubourg S."/>
            <person name="Chefdor F."/>
            <person name="Cooke R."/>
            <person name="Berger C."/>
            <person name="Monfort A."/>
            <person name="Casacuberta E."/>
            <person name="Gibbons T."/>
            <person name="Weber N."/>
            <person name="Vandenbol M."/>
            <person name="Bargues M."/>
            <person name="Terol J."/>
            <person name="Torres A."/>
            <person name="Perez-Perez A."/>
            <person name="Purnelle B."/>
            <person name="Bent E."/>
            <person name="Johnson S."/>
            <person name="Tacon D."/>
            <person name="Jesse T."/>
            <person name="Heijnen L."/>
            <person name="Schwarz S."/>
            <person name="Scholler P."/>
            <person name="Heber S."/>
            <person name="Francs P."/>
            <person name="Bielke C."/>
            <person name="Frishman D."/>
            <person name="Haase D."/>
            <person name="Lemcke K."/>
            <person name="Mewes H.-W."/>
            <person name="Stocker S."/>
            <person name="Zaccaria P."/>
            <person name="Bevan M."/>
            <person name="Wilson R.K."/>
            <person name="de la Bastide M."/>
            <person name="Habermann K."/>
            <person name="Parnell L."/>
            <person name="Dedhia N."/>
            <person name="Gnoj L."/>
            <person name="Schutz K."/>
            <person name="Huang E."/>
            <person name="Spiegel L."/>
            <person name="Sekhon M."/>
            <person name="Murray J."/>
            <person name="Sheet P."/>
            <person name="Cordes M."/>
            <person name="Abu-Threideh J."/>
            <person name="Stoneking T."/>
            <person name="Kalicki J."/>
            <person name="Graves T."/>
            <person name="Harmon G."/>
            <person name="Edwards J."/>
            <person name="Latreille P."/>
            <person name="Courtney L."/>
            <person name="Cloud J."/>
            <person name="Abbott A."/>
            <person name="Scott K."/>
            <person name="Johnson D."/>
            <person name="Minx P."/>
            <person name="Bentley D."/>
            <person name="Fulton B."/>
            <person name="Miller N."/>
            <person name="Greco T."/>
            <person name="Kemp K."/>
            <person name="Kramer J."/>
            <person name="Fulton L."/>
            <person name="Mardis E."/>
            <person name="Dante M."/>
            <person name="Pepin K."/>
            <person name="Hillier L.W."/>
            <person name="Nelson J."/>
            <person name="Spieth J."/>
            <person name="Ryan E."/>
            <person name="Andrews S."/>
            <person name="Geisel C."/>
            <person name="Layman D."/>
            <person name="Du H."/>
            <person name="Ali J."/>
            <person name="Berghoff A."/>
            <person name="Jones K."/>
            <person name="Drone K."/>
            <person name="Cotton M."/>
            <person name="Joshu C."/>
            <person name="Antonoiu B."/>
            <person name="Zidanic M."/>
            <person name="Strong C."/>
            <person name="Sun H."/>
            <person name="Lamar B."/>
            <person name="Yordan C."/>
            <person name="Ma P."/>
            <person name="Zhong J."/>
            <person name="Preston R."/>
            <person name="Vil D."/>
            <person name="Shekher M."/>
            <person name="Matero A."/>
            <person name="Shah R."/>
            <person name="Swaby I.K."/>
            <person name="O'Shaughnessy A."/>
            <person name="Rodriguez M."/>
            <person name="Hoffman J."/>
            <person name="Till S."/>
            <person name="Granat S."/>
            <person name="Shohdy N."/>
            <person name="Hasegawa A."/>
            <person name="Hameed A."/>
            <person name="Lodhi M."/>
            <person name="Johnson A."/>
            <person name="Chen E."/>
            <person name="Marra M.A."/>
            <person name="Martienssen R."/>
            <person name="McCombie W.R."/>
        </authorList>
    </citation>
    <scope>NUCLEOTIDE SEQUENCE [LARGE SCALE GENOMIC DNA]</scope>
    <source>
        <strain>cv. Columbia</strain>
    </source>
</reference>
<reference key="3">
    <citation type="journal article" date="2017" name="Plant J.">
        <title>Araport11: a complete reannotation of the Arabidopsis thaliana reference genome.</title>
        <authorList>
            <person name="Cheng C.Y."/>
            <person name="Krishnakumar V."/>
            <person name="Chan A.P."/>
            <person name="Thibaud-Nissen F."/>
            <person name="Schobel S."/>
            <person name="Town C.D."/>
        </authorList>
    </citation>
    <scope>GENOME REANNOTATION</scope>
    <source>
        <strain>cv. Columbia</strain>
    </source>
</reference>
<reference key="4">
    <citation type="submission" date="2006-03" db="EMBL/GenBank/DDBJ databases">
        <title>Arabidopsis ORF clones.</title>
        <authorList>
            <person name="Shinn P."/>
            <person name="Chen H."/>
            <person name="Kim C.J."/>
            <person name="Ecker J.R."/>
        </authorList>
    </citation>
    <scope>NUCLEOTIDE SEQUENCE [LARGE SCALE MRNA]</scope>
    <source>
        <strain>cv. Columbia</strain>
    </source>
</reference>
<reference key="5">
    <citation type="journal article" date="1999" name="Eur. J. Cell Biol.">
        <title>Mutations in the pilz group genes disrupt the microtubule cytoskeleton and uncouple cell cycle progression from cell division in Arabidopsis embryo and endosperm.</title>
        <authorList>
            <person name="Mayer U."/>
            <person name="Herzog U."/>
            <person name="Berger F."/>
            <person name="Inze D."/>
            <person name="Juergens G."/>
        </authorList>
    </citation>
    <scope>FUNCTION</scope>
</reference>
<reference key="6">
    <citation type="journal article" date="2002" name="Curr. Biol.">
        <title>Functional analysis of the tubulin-folding cofactor C in Arabidopsis thaliana.</title>
        <authorList>
            <person name="Kirik V."/>
            <person name="Mathur J."/>
            <person name="Grini P.E."/>
            <person name="Klinkhammer I."/>
            <person name="Adler K."/>
            <person name="Bechtold N."/>
            <person name="Herzog M."/>
            <person name="Bonneville J.-M."/>
            <person name="Huelskamp M."/>
        </authorList>
    </citation>
    <scope>FUNCTION</scope>
    <scope>DISRUPTION PHENOTYPE</scope>
    <scope>SUBCELLULAR LOCATION</scope>
    <scope>TISSUE SPECIFICITY</scope>
</reference>
<reference key="7">
    <citation type="journal article" date="2012" name="Mol. Cell. Proteomics">
        <title>Comparative large-scale characterisation of plant vs. mammal proteins reveals similar and idiosyncratic N-alpha acetylation features.</title>
        <authorList>
            <person name="Bienvenut W.V."/>
            <person name="Sumpton D."/>
            <person name="Martinez A."/>
            <person name="Lilla S."/>
            <person name="Espagne C."/>
            <person name="Meinnel T."/>
            <person name="Giglione C."/>
        </authorList>
    </citation>
    <scope>ACETYLATION [LARGE SCALE ANALYSIS] AT MET-1</scope>
    <scope>IDENTIFICATION BY MASS SPECTROMETRY [LARGE SCALE ANALYSIS]</scope>
</reference>
<name>TBCC_ARATH</name>
<dbReference type="EMBL" id="AF486850">
    <property type="protein sequence ID" value="AAM22959.1"/>
    <property type="molecule type" value="mRNA"/>
</dbReference>
<dbReference type="EMBL" id="AL035708">
    <property type="protein sequence ID" value="CAB38905.1"/>
    <property type="molecule type" value="Genomic_DNA"/>
</dbReference>
<dbReference type="EMBL" id="AL161596">
    <property type="protein sequence ID" value="CAB80655.1"/>
    <property type="molecule type" value="Genomic_DNA"/>
</dbReference>
<dbReference type="EMBL" id="CP002687">
    <property type="protein sequence ID" value="AEE87138.1"/>
    <property type="molecule type" value="Genomic_DNA"/>
</dbReference>
<dbReference type="EMBL" id="BT024735">
    <property type="protein sequence ID" value="ABD59073.1"/>
    <property type="molecule type" value="mRNA"/>
</dbReference>
<dbReference type="PIR" id="T06098">
    <property type="entry name" value="T06098"/>
</dbReference>
<dbReference type="RefSeq" id="NP_195702.1">
    <property type="nucleotide sequence ID" value="NM_120155.4"/>
</dbReference>
<dbReference type="SMR" id="Q9SMR2"/>
<dbReference type="FunCoup" id="Q9SMR2">
    <property type="interactions" value="2951"/>
</dbReference>
<dbReference type="STRING" id="3702.Q9SMR2"/>
<dbReference type="iPTMnet" id="Q9SMR2"/>
<dbReference type="PaxDb" id="3702-AT4G39920.1"/>
<dbReference type="ProteomicsDB" id="234193"/>
<dbReference type="EnsemblPlants" id="AT4G39920.1">
    <property type="protein sequence ID" value="AT4G39920.1"/>
    <property type="gene ID" value="AT4G39920"/>
</dbReference>
<dbReference type="GeneID" id="830151"/>
<dbReference type="Gramene" id="AT4G39920.1">
    <property type="protein sequence ID" value="AT4G39920.1"/>
    <property type="gene ID" value="AT4G39920"/>
</dbReference>
<dbReference type="KEGG" id="ath:AT4G39920"/>
<dbReference type="Araport" id="AT4G39920"/>
<dbReference type="TAIR" id="AT4G39920">
    <property type="gene designation" value="POR"/>
</dbReference>
<dbReference type="eggNOG" id="KOG2512">
    <property type="taxonomic scope" value="Eukaryota"/>
</dbReference>
<dbReference type="HOGENOM" id="CLU_032612_2_0_1"/>
<dbReference type="InParanoid" id="Q9SMR2"/>
<dbReference type="OMA" id="YFQHEIT"/>
<dbReference type="PhylomeDB" id="Q9SMR2"/>
<dbReference type="PRO" id="PR:Q9SMR2"/>
<dbReference type="Proteomes" id="UP000006548">
    <property type="component" value="Chromosome 4"/>
</dbReference>
<dbReference type="ExpressionAtlas" id="Q9SMR2">
    <property type="expression patterns" value="baseline and differential"/>
</dbReference>
<dbReference type="GO" id="GO:0005737">
    <property type="term" value="C:cytoplasm"/>
    <property type="evidence" value="ECO:0000314"/>
    <property type="project" value="TAIR"/>
</dbReference>
<dbReference type="GO" id="GO:0015631">
    <property type="term" value="F:tubulin binding"/>
    <property type="evidence" value="ECO:0007669"/>
    <property type="project" value="InterPro"/>
</dbReference>
<dbReference type="GO" id="GO:0000226">
    <property type="term" value="P:microtubule cytoskeleton organization"/>
    <property type="evidence" value="ECO:0000315"/>
    <property type="project" value="UniProtKB"/>
</dbReference>
<dbReference type="GO" id="GO:0007023">
    <property type="term" value="P:post-chaperonin tubulin folding pathway"/>
    <property type="evidence" value="ECO:0007669"/>
    <property type="project" value="InterPro"/>
</dbReference>
<dbReference type="GO" id="GO:0007021">
    <property type="term" value="P:tubulin complex assembly"/>
    <property type="evidence" value="ECO:0000250"/>
    <property type="project" value="TAIR"/>
</dbReference>
<dbReference type="FunFam" id="1.20.58.1250:FF:000003">
    <property type="entry name" value="Tubulin-folding cofactor C"/>
    <property type="match status" value="1"/>
</dbReference>
<dbReference type="FunFam" id="2.160.20.70:FF:000009">
    <property type="entry name" value="Tubulin-folding cofactor C"/>
    <property type="match status" value="1"/>
</dbReference>
<dbReference type="Gene3D" id="2.160.20.70">
    <property type="match status" value="1"/>
</dbReference>
<dbReference type="Gene3D" id="1.20.58.1250">
    <property type="entry name" value="Tubulin Binding Cofactor C, N-terminal domain"/>
    <property type="match status" value="1"/>
</dbReference>
<dbReference type="InterPro" id="IPR017901">
    <property type="entry name" value="C-CAP_CF_C-like"/>
</dbReference>
<dbReference type="InterPro" id="IPR016098">
    <property type="entry name" value="CAP/MinC_C"/>
</dbReference>
<dbReference type="InterPro" id="IPR006599">
    <property type="entry name" value="CARP_motif"/>
</dbReference>
<dbReference type="InterPro" id="IPR027684">
    <property type="entry name" value="TBCC"/>
</dbReference>
<dbReference type="InterPro" id="IPR031925">
    <property type="entry name" value="TBCC_N"/>
</dbReference>
<dbReference type="InterPro" id="IPR038397">
    <property type="entry name" value="TBCC_N_sf"/>
</dbReference>
<dbReference type="InterPro" id="IPR012945">
    <property type="entry name" value="Tubulin-bd_cofactor_C_dom"/>
</dbReference>
<dbReference type="PANTHER" id="PTHR15139">
    <property type="entry name" value="TUBULIN FOLDING COFACTOR C"/>
    <property type="match status" value="1"/>
</dbReference>
<dbReference type="PANTHER" id="PTHR15139:SF0">
    <property type="entry name" value="TUBULIN-SPECIFIC CHAPERONE C"/>
    <property type="match status" value="1"/>
</dbReference>
<dbReference type="Pfam" id="PF07986">
    <property type="entry name" value="TBCC"/>
    <property type="match status" value="1"/>
</dbReference>
<dbReference type="Pfam" id="PF16752">
    <property type="entry name" value="TBCC_N"/>
    <property type="match status" value="1"/>
</dbReference>
<dbReference type="SMART" id="SM00673">
    <property type="entry name" value="CARP"/>
    <property type="match status" value="2"/>
</dbReference>
<dbReference type="PROSITE" id="PS51329">
    <property type="entry name" value="C_CAP_COFACTOR_C"/>
    <property type="match status" value="1"/>
</dbReference>
<proteinExistence type="evidence at protein level"/>
<protein>
    <recommendedName>
        <fullName>Tubulin-folding cofactor C</fullName>
        <shortName>AtTFCC</shortName>
        <shortName>TFC C</shortName>
    </recommendedName>
    <alternativeName>
        <fullName>Protein PORCINO</fullName>
    </alternativeName>
</protein>
<keyword id="KW-0007">Acetylation</keyword>
<keyword id="KW-0143">Chaperone</keyword>
<keyword id="KW-0963">Cytoplasm</keyword>
<keyword id="KW-1185">Reference proteome</keyword>
<organism>
    <name type="scientific">Arabidopsis thaliana</name>
    <name type="common">Mouse-ear cress</name>
    <dbReference type="NCBI Taxonomy" id="3702"/>
    <lineage>
        <taxon>Eukaryota</taxon>
        <taxon>Viridiplantae</taxon>
        <taxon>Streptophyta</taxon>
        <taxon>Embryophyta</taxon>
        <taxon>Tracheophyta</taxon>
        <taxon>Spermatophyta</taxon>
        <taxon>Magnoliopsida</taxon>
        <taxon>eudicotyledons</taxon>
        <taxon>Gunneridae</taxon>
        <taxon>Pentapetalae</taxon>
        <taxon>rosids</taxon>
        <taxon>malvids</taxon>
        <taxon>Brassicales</taxon>
        <taxon>Brassicaceae</taxon>
        <taxon>Camelineae</taxon>
        <taxon>Arabidopsis</taxon>
    </lineage>
</organism>
<comment type="function">
    <text evidence="3 4 5">Essential tubulin-folding protein involved in the final step of the tubulin folding pathway. Required for continuous microtubule cytoskeleton organization, mitotic division, cytokinesis, and to couple cell cycle progression to cell division in embryos and endosperms. Not essential for cell viability. Binds probably to the multimeric supercomplex, stimulating GTP hydrolysis by the bound beta-tubulin and the release of the alpha-/beta-tubulin heterodimer.</text>
</comment>
<comment type="subunit">
    <text evidence="4">Supercomplex made of cofactors A to E. Cofactors A and D function by capturing and stabilizing tubulin in a quasi-native conformation. Cofactor E binds to the cofactor D-tubulin complex; interaction with cofactor C then causes the release of tubulin polypeptides that are committed to the native state.</text>
</comment>
<comment type="subcellular location">
    <subcellularLocation>
        <location evidence="4 5">Cytoplasm</location>
    </subcellularLocation>
    <text>Not associated with microtubular arrays.</text>
</comment>
<comment type="tissue specificity">
    <text evidence="4 5">Ubiquitously expressed (at protein level). Present in leaves, roots, flowers, and stems.</text>
</comment>
<comment type="disruption phenotype">
    <text evidence="4 5">Disturbed microtubule organization. Lethal embryos that consist of one or a few grossly enlarged cells that lack microtubules but not actin filaments. Failure to localize KNOLLE in mitotic cells. Cortical microtubules-free interphase cells and mitotic nuclei missing spindles. Reduced trichome size with fewer branches.</text>
</comment>
<comment type="miscellaneous">
    <text>Belongs to the PILZ group of genes that disrupt, when mutated, the microtubule cytoskeleton and produce mushroom-shaped ('pilz' in German) embryos.</text>
</comment>
<comment type="similarity">
    <text evidence="6">Belongs to the TBCC family.</text>
</comment>
<feature type="chain" id="PRO_0000420263" description="Tubulin-folding cofactor C">
    <location>
        <begin position="1"/>
        <end position="345"/>
    </location>
</feature>
<feature type="domain" description="C-CAP/cofactor C-like" evidence="1">
    <location>
        <begin position="169"/>
        <end position="318"/>
    </location>
</feature>
<feature type="region of interest" description="Disordered" evidence="2">
    <location>
        <begin position="1"/>
        <end position="83"/>
    </location>
</feature>
<feature type="compositionally biased region" description="Polar residues" evidence="2">
    <location>
        <begin position="1"/>
        <end position="10"/>
    </location>
</feature>
<feature type="compositionally biased region" description="Basic and acidic residues" evidence="2">
    <location>
        <begin position="23"/>
        <end position="39"/>
    </location>
</feature>
<feature type="compositionally biased region" description="Low complexity" evidence="2">
    <location>
        <begin position="40"/>
        <end position="55"/>
    </location>
</feature>
<feature type="compositionally biased region" description="Basic and acidic residues" evidence="2">
    <location>
        <begin position="61"/>
        <end position="73"/>
    </location>
</feature>
<feature type="compositionally biased region" description="Low complexity" evidence="2">
    <location>
        <begin position="74"/>
        <end position="83"/>
    </location>
</feature>
<feature type="modified residue" description="N-acetylmethionine" evidence="7">
    <location>
        <position position="1"/>
    </location>
</feature>
<feature type="mutagenesis site" description="Embryo lethal. Cortical microtubules-free interphase cells and mitotic nuclei without spindles." evidence="4">
    <original>S</original>
    <variation>L</variation>
    <location>
        <position position="238"/>
    </location>
</feature>
<feature type="sequence conflict" description="In Ref. 1; AAM22959." evidence="6" ref="1">
    <location>
        <begin position="154"/>
        <end position="158"/>
    </location>
</feature>
<accession>Q9SMR2</accession>
<accession>Q8L5R4</accession>
<evidence type="ECO:0000255" key="1">
    <source>
        <dbReference type="PROSITE-ProRule" id="PRU00659"/>
    </source>
</evidence>
<evidence type="ECO:0000256" key="2">
    <source>
        <dbReference type="SAM" id="MobiDB-lite"/>
    </source>
</evidence>
<evidence type="ECO:0000269" key="3">
    <source>
    </source>
</evidence>
<evidence type="ECO:0000269" key="4">
    <source>
    </source>
</evidence>
<evidence type="ECO:0000269" key="5">
    <source>
    </source>
</evidence>
<evidence type="ECO:0000305" key="6"/>
<evidence type="ECO:0007744" key="7">
    <source>
    </source>
</evidence>
<gene>
    <name type="primary">TFCC</name>
    <name type="synonym">POR</name>
    <name type="ordered locus">At4g39920</name>
    <name type="ORF">T5J17.90</name>
</gene>
<sequence length="345" mass="38309">MEDDGQSSVAETLDPALQKKHHDMLERLSARHQARKSDSPDSSSSSSSTLESTSSFLAKFSDSKRSIESRIAESRLASSSTDSSKLKSDLAEISVAIDNLEKLLAENSYFLPSYEVRSSLKIVSDLKQSLDILSGELVPKKKFSFKSKSTTKKPESKLPEIQKPDVVLPPKLVPVRDSPGLRNKHGETLVKSFEGSSIGEFTLSDLDSCQVKLTGTVNALFLHRLKKCSVYTGPVIGSILIDDVEDCVLVLASHQIRIHCARKSDFYLRVRSRPIIEDSNGVRFAPYCLDYKGIDEDLKTAGLEEETNNWANVDDFRWLRAVQSPNWSLLPEEERVSLLTISGDS</sequence>